<comment type="subcellular location">
    <molecule>Matrix protein p19</molecule>
    <subcellularLocation>
        <location evidence="4">Virion</location>
    </subcellularLocation>
</comment>
<comment type="domain">
    <molecule>Gag polyprotein</molecule>
    <text evidence="4">Late-budding domains (L domains) are short sequence motifs essential for viral particle budding. They recruit proteins of the host ESCRT machinery (Endosomal Sorting Complex Required for Transport) or ESCRT-associated proteins. Gag contains one L domain: a PPXY motif which potentially interacts with the WW domain 3 of NEDD4 E3 ubiquitin ligase (Potential).</text>
</comment>
<comment type="PTM">
    <molecule>Gag polyprotein</molecule>
    <text evidence="1">Specific enzymatic cleavages in vivo yield mature proteins.</text>
</comment>
<reference key="1">
    <citation type="journal article" date="1985" name="J. Virol.">
        <title>Primary structure of p19 species of avian sarcoma and leukemia viruses.</title>
        <authorList>
            <person name="Vogt V.M."/>
            <person name="Pepinsky R.B."/>
            <person name="Southard L.E."/>
        </authorList>
    </citation>
    <scope>NUCLEOTIDE SEQUENCE [GENOMIC RNA]</scope>
    <scope>PROTEOLYTIC CLEAVAGE (GAG POLYPROTEIN)</scope>
</reference>
<feature type="chain" id="PRO_0000442116" description="Gag polyprotein">
    <location>
        <begin position="1" status="less than"/>
        <end position="188"/>
    </location>
</feature>
<feature type="chain" id="PRO_0000040813" description="Matrix protein p19">
    <location>
        <begin position="1" status="less than"/>
        <end position="104"/>
    </location>
</feature>
<feature type="chain" id="PRO_0000442117" description="p2A">
    <location>
        <begin position="105"/>
        <end position="115"/>
    </location>
</feature>
<feature type="chain" id="PRO_0000442118" description="p2B">
    <location>
        <begin position="116"/>
        <end position="126"/>
    </location>
</feature>
<feature type="chain" id="PRO_0000040814" description="p10">
    <location>
        <begin position="127"/>
        <end position="188"/>
    </location>
</feature>
<feature type="region of interest" description="Disordered" evidence="2">
    <location>
        <begin position="77"/>
        <end position="99"/>
    </location>
</feature>
<feature type="region of interest" description="Disordered" evidence="2">
    <location>
        <begin position="130"/>
        <end position="166"/>
    </location>
</feature>
<feature type="short sequence motif" description="PPXY motif" evidence="1">
    <location>
        <begin position="121"/>
        <end position="124"/>
    </location>
</feature>
<feature type="compositionally biased region" description="Basic and acidic residues" evidence="2">
    <location>
        <begin position="77"/>
        <end position="90"/>
    </location>
</feature>
<feature type="site" description="Cleavage; by viral protease p15" evidence="3">
    <location>
        <begin position="104"/>
        <end position="105"/>
    </location>
</feature>
<feature type="site" description="Cleavage; by viral protease p15" evidence="1">
    <location>
        <begin position="115"/>
        <end position="116"/>
    </location>
</feature>
<feature type="site" description="Cleavage; by viral protease p15" evidence="1">
    <location>
        <begin position="126"/>
        <end position="127"/>
    </location>
</feature>
<feature type="non-terminal residue">
    <location>
        <position position="1"/>
    </location>
</feature>
<feature type="non-terminal residue">
    <location>
        <position position="188"/>
    </location>
</feature>
<sequence>DPITAALSQRAMVLGKSGELKTWGLVLGALKAAREEQVTSEQAKFWLGLGGGRVSPPGPECIEKPATERRIDKGEEVGETTVQRDAKMAPEETATPKTVGTSCYHCGTAIGCNCATASAPPPPYVGSGLYPSLAGVGEQQGQGGDTPRGAEQPRAEPGHAGLAPGPALTDWARIREELASTGPPVVAM</sequence>
<protein>
    <recommendedName>
        <fullName>Gag polyprotein</fullName>
    </recommendedName>
    <alternativeName>
        <fullName>Core polyprotein</fullName>
    </alternativeName>
    <component>
        <recommendedName>
            <fullName>Matrix protein p19</fullName>
        </recommendedName>
    </component>
    <component>
        <recommendedName>
            <fullName>p2A</fullName>
        </recommendedName>
    </component>
    <component>
        <recommendedName>
            <fullName>p2B</fullName>
        </recommendedName>
    </component>
    <component>
        <recommendedName>
            <fullName>p10</fullName>
        </recommendedName>
    </component>
</protein>
<gene>
    <name type="primary">ev-2</name>
</gene>
<evidence type="ECO:0000250" key="1">
    <source>
        <dbReference type="UniProtKB" id="P03322"/>
    </source>
</evidence>
<evidence type="ECO:0000256" key="2">
    <source>
        <dbReference type="SAM" id="MobiDB-lite"/>
    </source>
</evidence>
<evidence type="ECO:0000269" key="3">
    <source>
    </source>
</evidence>
<evidence type="ECO:0000305" key="4"/>
<proteinExistence type="evidence at protein level"/>
<name>GAG_AVEV2</name>
<keyword id="KW-0945">Host-virus interaction</keyword>
<keyword id="KW-1198">Viral budding</keyword>
<keyword id="KW-1187">Viral budding via the host ESCRT complexes</keyword>
<keyword id="KW-0468">Viral matrix protein</keyword>
<keyword id="KW-1188">Viral release from host cell</keyword>
<keyword id="KW-0946">Virion</keyword>
<accession>P06937</accession>
<organismHost>
    <name type="scientific">Galliformes</name>
    <dbReference type="NCBI Taxonomy" id="8976"/>
</organismHost>
<dbReference type="EMBL" id="M30518">
    <property type="protein sequence ID" value="AAA42568.1"/>
    <property type="molecule type" value="Genomic_RNA"/>
</dbReference>
<dbReference type="PIR" id="B25317">
    <property type="entry name" value="B25317"/>
</dbReference>
<dbReference type="SMR" id="P06937"/>
<dbReference type="GO" id="GO:0044423">
    <property type="term" value="C:virion component"/>
    <property type="evidence" value="ECO:0007669"/>
    <property type="project" value="UniProtKB-KW"/>
</dbReference>
<dbReference type="GO" id="GO:0039660">
    <property type="term" value="F:structural constituent of virion"/>
    <property type="evidence" value="ECO:0007669"/>
    <property type="project" value="UniProtKB-KW"/>
</dbReference>
<dbReference type="GO" id="GO:0039702">
    <property type="term" value="P:viral budding via host ESCRT complex"/>
    <property type="evidence" value="ECO:0007669"/>
    <property type="project" value="UniProtKB-KW"/>
</dbReference>
<dbReference type="Gene3D" id="1.10.150.90">
    <property type="entry name" value="Immunodeficiency lentiviruses, gag gene matrix protein p17"/>
    <property type="match status" value="1"/>
</dbReference>
<dbReference type="InterPro" id="IPR004028">
    <property type="entry name" value="Gag_M"/>
</dbReference>
<dbReference type="InterPro" id="IPR012344">
    <property type="entry name" value="Matrix_HIV/RSV_N"/>
</dbReference>
<dbReference type="InterPro" id="IPR010999">
    <property type="entry name" value="Retrovr_matrix"/>
</dbReference>
<dbReference type="Pfam" id="PF02813">
    <property type="entry name" value="Retro_M"/>
    <property type="match status" value="1"/>
</dbReference>
<dbReference type="SUPFAM" id="SSF47836">
    <property type="entry name" value="Retroviral matrix proteins"/>
    <property type="match status" value="1"/>
</dbReference>
<organism>
    <name type="scientific">Avian endogenous rous-associated virus-0</name>
    <name type="common">EV-2</name>
    <name type="synonym">Avian retrovirus RAV-0</name>
    <dbReference type="NCBI Taxonomy" id="11949"/>
    <lineage>
        <taxon>Viruses</taxon>
        <taxon>Riboviria</taxon>
        <taxon>Pararnavirae</taxon>
        <taxon>Artverviricota</taxon>
        <taxon>Revtraviricetes</taxon>
        <taxon>Ortervirales</taxon>
        <taxon>Retroviridae</taxon>
        <taxon>Orthoretrovirinae</taxon>
        <taxon>Alpharetrovirus</taxon>
        <taxon>Avian leukosis virus</taxon>
    </lineage>
</organism>